<feature type="signal peptide" evidence="21">
    <location>
        <begin position="1"/>
        <end status="unknown"/>
    </location>
</feature>
<feature type="chain" id="PRO_0000453926" description="Plasmepsin V">
    <location>
        <begin status="unknown"/>
        <end position="590"/>
    </location>
</feature>
<feature type="topological domain" description="Lumenal" evidence="13">
    <location>
        <begin position="1"/>
        <end position="544"/>
    </location>
</feature>
<feature type="transmembrane region" description="Helical" evidence="3">
    <location>
        <begin position="545"/>
        <end position="565"/>
    </location>
</feature>
<feature type="topological domain" description="Cytoplasmic" evidence="13">
    <location>
        <begin position="566"/>
        <end position="590"/>
    </location>
</feature>
<feature type="domain" description="Peptidase A1" evidence="4">
    <location>
        <begin position="100"/>
        <end position="514"/>
    </location>
</feature>
<feature type="region of interest" description="Disordered" evidence="6">
    <location>
        <begin position="282"/>
        <end position="316"/>
    </location>
</feature>
<feature type="coiled-coil region" evidence="3">
    <location>
        <begin position="33"/>
        <end position="81"/>
    </location>
</feature>
<feature type="compositionally biased region" description="Basic and acidic residues" evidence="6">
    <location>
        <begin position="282"/>
        <end position="291"/>
    </location>
</feature>
<feature type="compositionally biased region" description="Low complexity" evidence="6">
    <location>
        <begin position="292"/>
        <end position="304"/>
    </location>
</feature>
<feature type="active site" evidence="4">
    <location>
        <position position="118"/>
    </location>
</feature>
<feature type="active site" evidence="4">
    <location>
        <position position="365"/>
    </location>
</feature>
<feature type="disulfide bond" evidence="1">
    <location>
        <begin position="128"/>
        <end position="211"/>
    </location>
</feature>
<feature type="disulfide bond" evidence="1">
    <location>
        <begin position="131"/>
        <end position="134"/>
    </location>
</feature>
<feature type="disulfide bond" evidence="1">
    <location>
        <begin position="155"/>
        <end position="166"/>
    </location>
</feature>
<feature type="disulfide bond" evidence="1">
    <location>
        <begin position="160"/>
        <end position="171"/>
    </location>
</feature>
<feature type="disulfide bond" evidence="1">
    <location>
        <begin position="259"/>
        <end position="518"/>
    </location>
</feature>
<feature type="disulfide bond" evidence="1">
    <location>
        <begin position="389"/>
        <end position="434"/>
    </location>
</feature>
<feature type="disulfide bond" evidence="1">
    <location>
        <begin position="443"/>
        <end position="479"/>
    </location>
</feature>
<feature type="mutagenesis site" description="Loss of catalytic activity. Loss of catalytic activity; when associated with A-365 or A-365 and A-370." evidence="8 9 11">
    <original>D</original>
    <variation>A</variation>
    <location>
        <position position="118"/>
    </location>
</feature>
<feature type="mutagenesis site" description="Conditional deletion at the beginning of the first erythrocyte infection cycle results in no defect in egress and subsequent invasion. However, in the next invasion cycle, causes a severe growth defect and developmental arrest between the ring and trophozoite stages. Export of HRP2 into the host erythrocyte is also partially impaired." evidence="17">
    <location>
        <begin position="133"/>
        <end position="590"/>
    </location>
</feature>
<feature type="mutagenesis site" description="Loss of catalytic activity; when associated with A-118 or A-118 and A-370." evidence="8 11">
    <original>D</original>
    <variation>A</variation>
    <location>
        <position position="365"/>
    </location>
</feature>
<feature type="mutagenesis site" description="Loss of catalytic activity; when associated with A-118 and A-365." evidence="8">
    <original>F</original>
    <variation>A</variation>
    <location>
        <position position="370"/>
    </location>
</feature>
<organism evidence="23">
    <name type="scientific">Plasmodium falciparum (isolate 3D7)</name>
    <dbReference type="NCBI Taxonomy" id="36329"/>
    <lineage>
        <taxon>Eukaryota</taxon>
        <taxon>Sar</taxon>
        <taxon>Alveolata</taxon>
        <taxon>Apicomplexa</taxon>
        <taxon>Aconoidasida</taxon>
        <taxon>Haemosporida</taxon>
        <taxon>Plasmodiidae</taxon>
        <taxon>Plasmodium</taxon>
        <taxon>Plasmodium (Laverania)</taxon>
    </lineage>
</organism>
<proteinExistence type="evidence at protein level"/>
<gene>
    <name evidence="19" type="primary">PMV</name>
    <name evidence="22" type="ORF">PF3D7_1323500</name>
</gene>
<name>PLM5_PLAF7</name>
<protein>
    <recommendedName>
        <fullName evidence="19">Plasmepsin V</fullName>
        <shortName evidence="20">PfPMV</shortName>
        <ecNumber evidence="8 9 10 11 12 14 15">3.4.23.-</ecNumber>
    </recommendedName>
    <alternativeName>
        <fullName evidence="18">Plasmepsin 5</fullName>
    </alternativeName>
</protein>
<comment type="function">
    <text evidence="2 8 9 10 11 12 14 16 17">During the asexual blood stage, plays an essential role in the export of several proteins into the host erythrocytes by cleaving the pentameric localization motif RxLxE/Q/D (termed Plasmodium export element (PEXEL)) located downstream of the N-terminal secretory signal sequence (PubMed:20130643, PubMed:20130644, PubMed:24983235, PubMed:30127496, PubMed:30517136). Specifically, cleaves after the leucine residue in the RxLxE/Q/D (or RxLxxE) motif of exported proteins including RESA, EMP2, EMP3, KAHRP, RIF/Rifin and STEVOR (PubMed:20130643, PubMed:20130644, PubMed:23387285, PubMed:24983235, PubMed:25447707, PubMed:25986559). Also, by regulating protein export, plays an essential role in gametocyte development and thus, parasite transmission to the mosquito vector (By similarity).</text>
</comment>
<comment type="activity regulation">
    <text evidence="12 15">Inhibited by peptidomimetic inhibitor WEHI-842 (PubMed:26214367). Inhibited by Cu(2+) and Hg(2+) (PubMed:25447707).</text>
</comment>
<comment type="biophysicochemical properties">
    <phDependence>
        <text evidence="12 14">Optimum pH is between 5.5 and 7.</text>
    </phDependence>
</comment>
<comment type="subunit">
    <text evidence="16">Component of a complex composed of SPC25 and PMV; the interaction is mediated via the transmembrane domains (PubMed:30127496). The complex interacts with the SEC61 channel-forming translocon complex and is involved in the recognition and import of PEXEL motif-containing proteins into the ER for subsequent export (PubMed:30127496).</text>
</comment>
<comment type="subcellular location">
    <subcellularLocation>
        <location evidence="7 8 9 11 13 16">Endoplasmic reticulum membrane</location>
        <topology evidence="13">Single-pass type I membrane protein</topology>
    </subcellularLocation>
    <text evidence="2 16">During gametogenesis, localizes to the perinuclear ER in stage I-II gametocytes, and relocalizes towards the cell periphery as the ER redistributes in the cell in stage III-IV gametocytes (By similarity). Partially colocalizes with SPC25 in the endoplasmic reticulum (PubMed:30127496).</text>
</comment>
<comment type="developmental stage">
    <text evidence="7 16">Expressed during the asexual blood stage; expression is low at the ring stage and then increases through the trophozoite and schizont stages (at protein level).</text>
</comment>
<comment type="domain">
    <text evidence="9">The transmembrane domain is essential for localization to the endoplasmic reticulum.</text>
</comment>
<comment type="PTM">
    <text evidence="12 14">It is not clear if the zymogen has a cleavable propeptide (PubMed:25447707). In vitro, appears to be cleaved between Asn-80 and Ala-81 (PubMed:25447707). Cleavage of the putative propeptide is dispensable for catalytic activity (PubMed:25447707, PubMed:25986559).</text>
</comment>
<comment type="similarity">
    <text evidence="5">Belongs to the peptidase A1 family.</text>
</comment>
<comment type="caution">
    <text evidence="21">It is unclear if PMV is glycosylated as other members of the same enzyme family, ie. PMI and PMII, are not.</text>
</comment>
<dbReference type="EC" id="3.4.23.-" evidence="8 9 10 11 12 14 15"/>
<dbReference type="EMBL" id="AL844509">
    <property type="protein sequence ID" value="CAD52383.1"/>
    <property type="molecule type" value="Genomic_DNA"/>
</dbReference>
<dbReference type="RefSeq" id="XP_001349975.1">
    <property type="nucleotide sequence ID" value="XM_001349939.1"/>
</dbReference>
<dbReference type="SMR" id="Q8I6Z5"/>
<dbReference type="STRING" id="36329.Q8I6Z5"/>
<dbReference type="BindingDB" id="Q8I6Z5"/>
<dbReference type="ChEMBL" id="CHEMBL3559649"/>
<dbReference type="GuidetoPHARMACOLOGY" id="3106"/>
<dbReference type="MEROPS" id="A01.075"/>
<dbReference type="TCDB" id="8.A.32.1.6">
    <property type="family name" value="the Beta-amyloid cleaving enzyme (bace1) family"/>
</dbReference>
<dbReference type="SwissPalm" id="Q8I6Z5"/>
<dbReference type="PaxDb" id="5833-PF13_0133"/>
<dbReference type="EnsemblProtists" id="CAD52383">
    <property type="protein sequence ID" value="CAD52383"/>
    <property type="gene ID" value="PF3D7_1323500"/>
</dbReference>
<dbReference type="GeneID" id="814104"/>
<dbReference type="KEGG" id="pfa:PF3D7_1323500"/>
<dbReference type="VEuPathDB" id="PlasmoDB:PF3D7_1323500"/>
<dbReference type="HOGENOM" id="CLU_526282_0_0_1"/>
<dbReference type="InParanoid" id="Q8I6Z5"/>
<dbReference type="OMA" id="CGVHMEN"/>
<dbReference type="OrthoDB" id="2747330at2759"/>
<dbReference type="PhylomeDB" id="Q8I6Z5"/>
<dbReference type="BRENDA" id="3.4.23.B19">
    <property type="organism ID" value="4889"/>
</dbReference>
<dbReference type="Reactome" id="R-PFA-2132295">
    <property type="pathway name" value="MHC class II antigen presentation"/>
</dbReference>
<dbReference type="Reactome" id="R-PFA-6798695">
    <property type="pathway name" value="Neutrophil degranulation"/>
</dbReference>
<dbReference type="PHI-base" id="PHI:8625"/>
<dbReference type="Proteomes" id="UP000001450">
    <property type="component" value="Chromosome 13"/>
</dbReference>
<dbReference type="GO" id="GO:0005783">
    <property type="term" value="C:endoplasmic reticulum"/>
    <property type="evidence" value="ECO:0000314"/>
    <property type="project" value="GeneDB"/>
</dbReference>
<dbReference type="GO" id="GO:0005789">
    <property type="term" value="C:endoplasmic reticulum membrane"/>
    <property type="evidence" value="ECO:0000314"/>
    <property type="project" value="UniProtKB"/>
</dbReference>
<dbReference type="GO" id="GO:0005764">
    <property type="term" value="C:lysosome"/>
    <property type="evidence" value="ECO:0000318"/>
    <property type="project" value="GO_Central"/>
</dbReference>
<dbReference type="GO" id="GO:0004190">
    <property type="term" value="F:aspartic-type endopeptidase activity"/>
    <property type="evidence" value="ECO:0000314"/>
    <property type="project" value="UniProtKB"/>
</dbReference>
<dbReference type="GO" id="GO:0032527">
    <property type="term" value="P:protein exit from endoplasmic reticulum"/>
    <property type="evidence" value="ECO:0000315"/>
    <property type="project" value="UniProtKB"/>
</dbReference>
<dbReference type="GO" id="GO:0016485">
    <property type="term" value="P:protein processing"/>
    <property type="evidence" value="ECO:0000314"/>
    <property type="project" value="UniProtKB"/>
</dbReference>
<dbReference type="GO" id="GO:0006508">
    <property type="term" value="P:proteolysis"/>
    <property type="evidence" value="ECO:0000314"/>
    <property type="project" value="GeneDB"/>
</dbReference>
<dbReference type="CDD" id="cd06096">
    <property type="entry name" value="Plasmepsin_5"/>
    <property type="match status" value="1"/>
</dbReference>
<dbReference type="FunFam" id="2.40.70.10:FF:000080">
    <property type="entry name" value="Plasmepsin V"/>
    <property type="match status" value="1"/>
</dbReference>
<dbReference type="Gene3D" id="2.40.70.10">
    <property type="entry name" value="Acid Proteases"/>
    <property type="match status" value="2"/>
</dbReference>
<dbReference type="InterPro" id="IPR001461">
    <property type="entry name" value="Aspartic_peptidase_A1"/>
</dbReference>
<dbReference type="InterPro" id="IPR001969">
    <property type="entry name" value="Aspartic_peptidase_AS"/>
</dbReference>
<dbReference type="InterPro" id="IPR033121">
    <property type="entry name" value="PEPTIDASE_A1"/>
</dbReference>
<dbReference type="InterPro" id="IPR021109">
    <property type="entry name" value="Peptidase_aspartic_dom_sf"/>
</dbReference>
<dbReference type="InterPro" id="IPR033866">
    <property type="entry name" value="Plasmepsin_5"/>
</dbReference>
<dbReference type="InterPro" id="IPR032861">
    <property type="entry name" value="TAXi_N"/>
</dbReference>
<dbReference type="PANTHER" id="PTHR13683">
    <property type="entry name" value="ASPARTYL PROTEASES"/>
    <property type="match status" value="1"/>
</dbReference>
<dbReference type="PANTHER" id="PTHR13683:SF375">
    <property type="entry name" value="PEPTIDASE A1 DOMAIN-CONTAINING PROTEIN"/>
    <property type="match status" value="1"/>
</dbReference>
<dbReference type="Pfam" id="PF00026">
    <property type="entry name" value="Asp"/>
    <property type="match status" value="1"/>
</dbReference>
<dbReference type="Pfam" id="PF14543">
    <property type="entry name" value="TAXi_N"/>
    <property type="match status" value="1"/>
</dbReference>
<dbReference type="PRINTS" id="PR00792">
    <property type="entry name" value="PEPSIN"/>
</dbReference>
<dbReference type="SUPFAM" id="SSF50630">
    <property type="entry name" value="Acid proteases"/>
    <property type="match status" value="1"/>
</dbReference>
<dbReference type="PROSITE" id="PS00141">
    <property type="entry name" value="ASP_PROTEASE"/>
    <property type="match status" value="2"/>
</dbReference>
<dbReference type="PROSITE" id="PS51767">
    <property type="entry name" value="PEPTIDASE_A1"/>
    <property type="match status" value="1"/>
</dbReference>
<accession>Q8I6Z5</accession>
<reference evidence="23" key="1">
    <citation type="journal article" date="2002" name="Nature">
        <title>Genome sequence of the human malaria parasite Plasmodium falciparum.</title>
        <authorList>
            <person name="Gardner M.J."/>
            <person name="Hall N."/>
            <person name="Fung E."/>
            <person name="White O."/>
            <person name="Berriman M."/>
            <person name="Hyman R.W."/>
            <person name="Carlton J.M."/>
            <person name="Pain A."/>
            <person name="Nelson K.E."/>
            <person name="Bowman S."/>
            <person name="Paulsen I.T."/>
            <person name="James K.D."/>
            <person name="Eisen J.A."/>
            <person name="Rutherford K.M."/>
            <person name="Salzberg S.L."/>
            <person name="Craig A."/>
            <person name="Kyes S."/>
            <person name="Chan M.-S."/>
            <person name="Nene V."/>
            <person name="Shallom S.J."/>
            <person name="Suh B."/>
            <person name="Peterson J."/>
            <person name="Angiuoli S."/>
            <person name="Pertea M."/>
            <person name="Allen J."/>
            <person name="Selengut J."/>
            <person name="Haft D."/>
            <person name="Mather M.W."/>
            <person name="Vaidya A.B."/>
            <person name="Martin D.M.A."/>
            <person name="Fairlamb A.H."/>
            <person name="Fraunholz M.J."/>
            <person name="Roos D.S."/>
            <person name="Ralph S.A."/>
            <person name="McFadden G.I."/>
            <person name="Cummings L.M."/>
            <person name="Subramanian G.M."/>
            <person name="Mungall C."/>
            <person name="Venter J.C."/>
            <person name="Carucci D.J."/>
            <person name="Hoffman S.L."/>
            <person name="Newbold C."/>
            <person name="Davis R.W."/>
            <person name="Fraser C.M."/>
            <person name="Barrell B.G."/>
        </authorList>
    </citation>
    <scope>NUCLEOTIDE SEQUENCE [LARGE SCALE GENOMIC DNA]</scope>
    <source>
        <strain evidence="23">3D7</strain>
    </source>
</reference>
<reference evidence="23" key="2">
    <citation type="journal article" date="2002" name="Nature">
        <title>Sequence of Plasmodium falciparum chromosomes 1, 3-9 and 13.</title>
        <authorList>
            <person name="Hall N."/>
            <person name="Pain A."/>
            <person name="Berriman M."/>
            <person name="Churcher C.M."/>
            <person name="Harris B."/>
            <person name="Harris D."/>
            <person name="Mungall K.L."/>
            <person name="Bowman S."/>
            <person name="Atkin R."/>
            <person name="Baker S."/>
            <person name="Barron A."/>
            <person name="Brooks K."/>
            <person name="Buckee C.O."/>
            <person name="Burrows C."/>
            <person name="Cherevach I."/>
            <person name="Chillingworth C."/>
            <person name="Chillingworth T."/>
            <person name="Christodoulou Z."/>
            <person name="Clark L."/>
            <person name="Clark R."/>
            <person name="Corton C."/>
            <person name="Cronin A."/>
            <person name="Davies R.M."/>
            <person name="Davis P."/>
            <person name="Dear P."/>
            <person name="Dearden F."/>
            <person name="Doggett J."/>
            <person name="Feltwell T."/>
            <person name="Goble A."/>
            <person name="Goodhead I."/>
            <person name="Gwilliam R."/>
            <person name="Hamlin N."/>
            <person name="Hance Z."/>
            <person name="Harper D."/>
            <person name="Hauser H."/>
            <person name="Hornsby T."/>
            <person name="Holroyd S."/>
            <person name="Horrocks P."/>
            <person name="Humphray S."/>
            <person name="Jagels K."/>
            <person name="James K.D."/>
            <person name="Johnson D."/>
            <person name="Kerhornou A."/>
            <person name="Knights A."/>
            <person name="Konfortov B."/>
            <person name="Kyes S."/>
            <person name="Larke N."/>
            <person name="Lawson D."/>
            <person name="Lennard N."/>
            <person name="Line A."/>
            <person name="Maddison M."/>
            <person name="Mclean J."/>
            <person name="Mooney P."/>
            <person name="Moule S."/>
            <person name="Murphy L."/>
            <person name="Oliver K."/>
            <person name="Ormond D."/>
            <person name="Price C."/>
            <person name="Quail M.A."/>
            <person name="Rabbinowitsch E."/>
            <person name="Rajandream M.A."/>
            <person name="Rutter S."/>
            <person name="Rutherford K.M."/>
            <person name="Sanders M."/>
            <person name="Simmonds M."/>
            <person name="Seeger K."/>
            <person name="Sharp S."/>
            <person name="Smith R."/>
            <person name="Squares R."/>
            <person name="Squares S."/>
            <person name="Stevens K."/>
            <person name="Taylor K."/>
            <person name="Tivey A."/>
            <person name="Unwin L."/>
            <person name="Whitehead S."/>
            <person name="Woodward J.R."/>
            <person name="Sulston J.E."/>
            <person name="Craig A."/>
            <person name="Newbold C."/>
            <person name="Barrell B.G."/>
        </authorList>
    </citation>
    <scope>NUCLEOTIDE SEQUENCE [LARGE SCALE GENOMIC DNA]</scope>
    <source>
        <strain evidence="23">3D7</strain>
    </source>
</reference>
<reference evidence="21" key="3">
    <citation type="journal article" date="2010" name="Mol. Biochem. Parasitol.">
        <title>The host targeting motif in exported Plasmodium proteins is cleaved in the parasite endoplasmic reticulum.</title>
        <authorList>
            <person name="Osborne A.R."/>
            <person name="Speicher K.D."/>
            <person name="Tamez P.A."/>
            <person name="Bhattacharjee S."/>
            <person name="Speicher D.W."/>
            <person name="Haldar K."/>
        </authorList>
    </citation>
    <scope>SUBCELLULAR LOCATION</scope>
    <scope>DEVELOPMENTAL STAGE</scope>
</reference>
<reference evidence="21" key="4">
    <citation type="journal article" date="2010" name="Nature">
        <title>An aspartyl protease directs malaria effector proteins to the host cell.</title>
        <authorList>
            <person name="Boddey J.A."/>
            <person name="Hodder A.N."/>
            <person name="Guenther S."/>
            <person name="Gilson P.R."/>
            <person name="Patsiouras H."/>
            <person name="Kapp E.A."/>
            <person name="Pearce J.A."/>
            <person name="de Koning-Ward T.F."/>
            <person name="Simpson R.J."/>
            <person name="Crabb B.S."/>
            <person name="Cowman A.F."/>
        </authorList>
    </citation>
    <scope>FUNCTION</scope>
    <scope>CATALYTIC ACTIVITY</scope>
    <scope>SUBCELLULAR LOCATION</scope>
    <scope>MUTAGENESIS OF ASP-118; ASP-365 AND PHE-370</scope>
</reference>
<reference evidence="21" key="5">
    <citation type="journal article" date="2010" name="Nature">
        <title>Plasmepsin V licenses Plasmodium proteins for export into the host erythrocyte.</title>
        <authorList>
            <person name="Russo I."/>
            <person name="Babbitt S."/>
            <person name="Muralidharan V."/>
            <person name="Butler T."/>
            <person name="Oksman A."/>
            <person name="Goldberg D.E."/>
        </authorList>
    </citation>
    <scope>FUNCTION</scope>
    <scope>CATALYTIC ACTIVITY</scope>
    <scope>SUBCELLULAR LOCATION</scope>
    <scope>DOMAIN</scope>
    <scope>MUTAGENESIS OF ASP-118</scope>
</reference>
<reference evidence="21" key="6">
    <citation type="journal article" date="2013" name="Traffic">
        <title>Role of plasmepsin V in export of diverse protein families from the Plasmodium falciparum exportome.</title>
        <authorList>
            <person name="Boddey J.A."/>
            <person name="Carvalho T.G."/>
            <person name="Hodder A.N."/>
            <person name="Sargeant T.J."/>
            <person name="Sleebs B.E."/>
            <person name="Marapana D."/>
            <person name="Lopaticki S."/>
            <person name="Nebl T."/>
            <person name="Cowman A.F."/>
        </authorList>
    </citation>
    <scope>FUNCTION</scope>
    <scope>CATALYTIC ACTIVITY</scope>
</reference>
<reference evidence="21" key="7">
    <citation type="journal article" date="2014" name="Mol. Biochem. Parasitol.">
        <title>The zymogen of plasmepsin V from Plasmodium falciparum is enzymatically active.</title>
        <authorList>
            <person name="Xiao H."/>
            <person name="Bryksa B.C."/>
            <person name="Bhaumik P."/>
            <person name="Gustchina A."/>
            <person name="Kiso Y."/>
            <person name="Yao S.Q."/>
            <person name="Wlodawer A."/>
            <person name="Yada R.Y."/>
        </authorList>
    </citation>
    <scope>FUNCTION</scope>
    <scope>CATALYTIC ACTIVITY</scope>
    <scope>ACTIVITY REGULATION</scope>
    <scope>BIOPHYSICOCHEMICAL PROPERTIES</scope>
    <scope>PROTEOLYTIC CLEAVAGE</scope>
</reference>
<reference evidence="21" key="8">
    <citation type="journal article" date="2014" name="PLoS Biol.">
        <title>Inhibition of Plasmepsin V activity demonstrates its essential role in protein export, PfEMP1 display, and survival of malaria parasites.</title>
        <authorList>
            <person name="Sleebs B.E."/>
            <person name="Lopaticki S."/>
            <person name="Marapana D.S."/>
            <person name="O'Neill M.T."/>
            <person name="Rajasekaran P."/>
            <person name="Gazdik M."/>
            <person name="Guenther S."/>
            <person name="Whitehead L.W."/>
            <person name="Lowes K.N."/>
            <person name="Barfod L."/>
            <person name="Hviid L."/>
            <person name="Shaw P.J."/>
            <person name="Hodder A.N."/>
            <person name="Smith B.J."/>
            <person name="Cowman A.F."/>
            <person name="Boddey J.A."/>
        </authorList>
    </citation>
    <scope>FUNCTION</scope>
    <scope>CATALYTIC ACTIVITY</scope>
    <scope>SUBCELLULAR LOCATION</scope>
    <scope>MUTAGENESIS OF ASP-118 AND ASP-365</scope>
</reference>
<reference evidence="21" key="9">
    <citation type="journal article" date="2015" name="Mol. Biochem. Parasitol.">
        <title>Plasmodium falciparum Plasmepsin V (PfPMV): Insights into recombinant expression, substrate specificity and active site structure.</title>
        <authorList>
            <person name="Boonyalai N."/>
            <person name="Sittikul P."/>
            <person name="Yuvaniyama J."/>
        </authorList>
    </citation>
    <scope>FUNCTION</scope>
    <scope>CATALYTIC ACTIVITY</scope>
    <scope>BIOPHYSICOCHEMICAL PROPERTIES</scope>
    <scope>PROTEOLYTIC CLEAVAGE</scope>
</reference>
<reference evidence="21" key="10">
    <citation type="journal article" date="2015" name="Nat. Struct. Mol. Biol.">
        <title>Structural basis for plasmepsin V inhibition that blocks export of malaria proteins to human erythrocytes.</title>
        <authorList>
            <person name="Hodder A.N."/>
            <person name="Sleebs B.E."/>
            <person name="Czabotar P.E."/>
            <person name="Gazdik M."/>
            <person name="Xu Y."/>
            <person name="O'Neill M.T."/>
            <person name="Lopaticki S."/>
            <person name="Nebl T."/>
            <person name="Triglia T."/>
            <person name="Smith B.J."/>
            <person name="Lowes K."/>
            <person name="Boddey J.A."/>
            <person name="Cowman A.F."/>
        </authorList>
    </citation>
    <scope>CATALYTIC ACTIVITY</scope>
    <scope>ACTIVITY REGULATION</scope>
</reference>
<reference evidence="21" key="11">
    <citation type="journal article" date="2015" name="PLoS ONE">
        <title>Experimental determination of the membrane topology of the Plasmodium protease Plasmepsin V.</title>
        <authorList>
            <person name="Tarr S.J."/>
            <person name="Osborne A.R."/>
        </authorList>
    </citation>
    <scope>SUBCELLULAR LOCATION</scope>
    <scope>TOPOLOGY</scope>
</reference>
<reference evidence="21" key="12">
    <citation type="journal article" date="2018" name="Nat. Microbiol.">
        <title>Plasmepsin V cleaves malaria effector proteins in a distinct endoplasmic reticulum translocation interactome for export to the erythrocyte.</title>
        <authorList>
            <person name="Marapana D.S."/>
            <person name="Dagley L.F."/>
            <person name="Sandow J.J."/>
            <person name="Nebl T."/>
            <person name="Triglia T."/>
            <person name="Pasternak M."/>
            <person name="Dickerman B.K."/>
            <person name="Crabb B.S."/>
            <person name="Gilson P.R."/>
            <person name="Webb A.I."/>
            <person name="Boddey J.A."/>
            <person name="Cowman A.F."/>
        </authorList>
    </citation>
    <scope>FUNCTION</scope>
    <scope>IDENTIFICATION IN A COMPLEX WITH SPC25</scope>
    <scope>INTERACTION WITH THE SEC61 CHANNEL-FORMING TRANSLOCON COMPLEX</scope>
    <scope>SUBCELLULAR LOCATION</scope>
    <scope>DEVELOPMENTAL STAGE</scope>
</reference>
<reference evidence="21" key="13">
    <citation type="journal article" date="2018" name="PLoS ONE">
        <title>Essentiality of Plasmodium falciparum plasmepsin V.</title>
        <authorList>
            <person name="Boonyalai N."/>
            <person name="Collins C.R."/>
            <person name="Hackett F."/>
            <person name="Withers-Martinez C."/>
            <person name="Blackman M.J."/>
        </authorList>
    </citation>
    <scope>FUNCTION</scope>
    <scope>MUTAGENESIS OF 133-ASP--THR-590</scope>
</reference>
<sequence length="590" mass="68480">MNNYFLRKENFFILFCFVFVSIFFVSNVTIIKCNNVENKIDNVGKKIENVGKKIGDMENKNDNVENKNDNVGNKNDNVKNASSDLYKYKLYGDIDEYAYYFLDIDIGKPSQRISLILDTGSSSLSFPCNGCKDCGIHMEKPYNLNYSKTSSILYCNKSNCPYGLKCVGNKCEYLQSYCEGSQIYGFYFSDIVTLPSYNNKNKISFEKLMGCHMHEESLFLHQQATGVLGFSLTKPNGVPTFVDLLFKHTPSLKPIYSICVSEHGGELIIGGYEPDYFLSNQKEKQKMDKSDNNSSNKGNVSIKLKNNDKNDDEENNSKDVIVSNNVEDIVWQAITRKYYYYIKIYGLDLYGTNIMDKKELDMLVDSGSTFTHIPENIYNQINYYLDILCIHDMTNIYEINKRLKLTNESLNKPLVYFEDFKTALKNIIQNENLCIKIVDGVQCWKSLENLPNLYITLSNNYKMIWKPSSYLYKKESFWCKGLEKQVNNKPILGLTFFKNKQVIFDLQQNQIAFIESKCPSNLTSSRPRTFNEYREKENIFLKVSYINLYCLWLLLALTILLSLILYVRKMFYMDYFPLSDQNKSPIQEST</sequence>
<evidence type="ECO:0000250" key="1">
    <source>
        <dbReference type="UniProtKB" id="A5K302"/>
    </source>
</evidence>
<evidence type="ECO:0000250" key="2">
    <source>
        <dbReference type="UniProtKB" id="W7JPD9"/>
    </source>
</evidence>
<evidence type="ECO:0000255" key="3"/>
<evidence type="ECO:0000255" key="4">
    <source>
        <dbReference type="PROSITE-ProRule" id="PRU01103"/>
    </source>
</evidence>
<evidence type="ECO:0000255" key="5">
    <source>
        <dbReference type="RuleBase" id="RU000454"/>
    </source>
</evidence>
<evidence type="ECO:0000256" key="6">
    <source>
        <dbReference type="SAM" id="MobiDB-lite"/>
    </source>
</evidence>
<evidence type="ECO:0000269" key="7">
    <source>
    </source>
</evidence>
<evidence type="ECO:0000269" key="8">
    <source>
    </source>
</evidence>
<evidence type="ECO:0000269" key="9">
    <source>
    </source>
</evidence>
<evidence type="ECO:0000269" key="10">
    <source>
    </source>
</evidence>
<evidence type="ECO:0000269" key="11">
    <source>
    </source>
</evidence>
<evidence type="ECO:0000269" key="12">
    <source>
    </source>
</evidence>
<evidence type="ECO:0000269" key="13">
    <source>
    </source>
</evidence>
<evidence type="ECO:0000269" key="14">
    <source>
    </source>
</evidence>
<evidence type="ECO:0000269" key="15">
    <source>
    </source>
</evidence>
<evidence type="ECO:0000269" key="16">
    <source>
    </source>
</evidence>
<evidence type="ECO:0000269" key="17">
    <source>
    </source>
</evidence>
<evidence type="ECO:0000303" key="18">
    <source>
    </source>
</evidence>
<evidence type="ECO:0000303" key="19">
    <source>
    </source>
</evidence>
<evidence type="ECO:0000303" key="20">
    <source>
    </source>
</evidence>
<evidence type="ECO:0000305" key="21"/>
<evidence type="ECO:0000312" key="22">
    <source>
        <dbReference type="EMBL" id="CAD52383.1"/>
    </source>
</evidence>
<evidence type="ECO:0000312" key="23">
    <source>
        <dbReference type="Proteomes" id="UP000001450"/>
    </source>
</evidence>
<keyword id="KW-0064">Aspartyl protease</keyword>
<keyword id="KW-0175">Coiled coil</keyword>
<keyword id="KW-1015">Disulfide bond</keyword>
<keyword id="KW-0256">Endoplasmic reticulum</keyword>
<keyword id="KW-0378">Hydrolase</keyword>
<keyword id="KW-0472">Membrane</keyword>
<keyword id="KW-0645">Protease</keyword>
<keyword id="KW-1185">Reference proteome</keyword>
<keyword id="KW-0732">Signal</keyword>
<keyword id="KW-0812">Transmembrane</keyword>
<keyword id="KW-1133">Transmembrane helix</keyword>